<evidence type="ECO:0000250" key="1"/>
<evidence type="ECO:0000255" key="2">
    <source>
        <dbReference type="PROSITE-ProRule" id="PRU00062"/>
    </source>
</evidence>
<evidence type="ECO:0000255" key="3">
    <source>
        <dbReference type="PROSITE-ProRule" id="PRU00192"/>
    </source>
</evidence>
<evidence type="ECO:0000255" key="4">
    <source>
        <dbReference type="PROSITE-ProRule" id="PRU00361"/>
    </source>
</evidence>
<evidence type="ECO:0000256" key="5">
    <source>
        <dbReference type="SAM" id="MobiDB-lite"/>
    </source>
</evidence>
<evidence type="ECO:0000269" key="6">
    <source>
    </source>
</evidence>
<evidence type="ECO:0000305" key="7"/>
<gene>
    <name type="primary">ARHGEF37</name>
</gene>
<keyword id="KW-0344">Guanine-nucleotide releasing factor</keyword>
<keyword id="KW-1267">Proteomics identification</keyword>
<keyword id="KW-1185">Reference proteome</keyword>
<keyword id="KW-0677">Repeat</keyword>
<keyword id="KW-0728">SH3 domain</keyword>
<protein>
    <recommendedName>
        <fullName>Rho guanine nucleotide exchange factor 37</fullName>
    </recommendedName>
</protein>
<organism>
    <name type="scientific">Homo sapiens</name>
    <name type="common">Human</name>
    <dbReference type="NCBI Taxonomy" id="9606"/>
    <lineage>
        <taxon>Eukaryota</taxon>
        <taxon>Metazoa</taxon>
        <taxon>Chordata</taxon>
        <taxon>Craniata</taxon>
        <taxon>Vertebrata</taxon>
        <taxon>Euteleostomi</taxon>
        <taxon>Mammalia</taxon>
        <taxon>Eutheria</taxon>
        <taxon>Euarchontoglires</taxon>
        <taxon>Primates</taxon>
        <taxon>Haplorrhini</taxon>
        <taxon>Catarrhini</taxon>
        <taxon>Hominidae</taxon>
        <taxon>Homo</taxon>
    </lineage>
</organism>
<accession>A1IGU5</accession>
<accession>Q6ZW51</accession>
<feature type="chain" id="PRO_0000337050" description="Rho guanine nucleotide exchange factor 37">
    <location>
        <begin position="1"/>
        <end position="675"/>
    </location>
</feature>
<feature type="domain" description="DH" evidence="2">
    <location>
        <begin position="30"/>
        <end position="213"/>
    </location>
</feature>
<feature type="domain" description="BAR" evidence="4">
    <location>
        <begin position="254"/>
        <end position="455"/>
    </location>
</feature>
<feature type="domain" description="SH3 1" evidence="3">
    <location>
        <begin position="506"/>
        <end position="569"/>
    </location>
</feature>
<feature type="domain" description="SH3 2" evidence="3">
    <location>
        <begin position="602"/>
        <end position="665"/>
    </location>
</feature>
<feature type="region of interest" description="Disordered" evidence="5">
    <location>
        <begin position="1"/>
        <end position="26"/>
    </location>
</feature>
<feature type="sequence variant" id="VAR_043579" description="In dbSNP:rs4629585.">
    <original>M</original>
    <variation>L</variation>
    <location>
        <position position="421"/>
    </location>
</feature>
<feature type="sequence variant" id="VAR_043580" description="In dbSNP:rs9324624." evidence="6">
    <original>P</original>
    <variation>L</variation>
    <location>
        <position position="489"/>
    </location>
</feature>
<feature type="sequence variant" id="VAR_043581" description="In dbSNP:rs7732714.">
    <original>S</original>
    <variation>R</variation>
    <location>
        <position position="518"/>
    </location>
</feature>
<feature type="sequence variant" id="VAR_043582" description="In dbSNP:rs3733662.">
    <original>P</original>
    <variation>T</variation>
    <location>
        <position position="586"/>
    </location>
</feature>
<feature type="sequence variant" id="VAR_043583" description="In dbSNP:rs1135093." evidence="6">
    <original>M</original>
    <variation>V</variation>
    <location>
        <position position="604"/>
    </location>
</feature>
<dbReference type="EMBL" id="AB199796">
    <property type="protein sequence ID" value="BAF43710.1"/>
    <property type="molecule type" value="mRNA"/>
</dbReference>
<dbReference type="EMBL" id="AK123597">
    <property type="protein sequence ID" value="BAC85655.1"/>
    <property type="status" value="ALT_INIT"/>
    <property type="molecule type" value="mRNA"/>
</dbReference>
<dbReference type="CCDS" id="CCDS43385.1"/>
<dbReference type="RefSeq" id="NP_001001669.2">
    <property type="nucleotide sequence ID" value="NM_001001669.3"/>
</dbReference>
<dbReference type="RefSeq" id="XP_005268504.1">
    <property type="nucleotide sequence ID" value="XM_005268447.4"/>
</dbReference>
<dbReference type="RefSeq" id="XP_006714847.1">
    <property type="nucleotide sequence ID" value="XM_006714784.4"/>
</dbReference>
<dbReference type="SMR" id="A1IGU5"/>
<dbReference type="BioGRID" id="133100">
    <property type="interactions" value="6"/>
</dbReference>
<dbReference type="FunCoup" id="A1IGU5">
    <property type="interactions" value="590"/>
</dbReference>
<dbReference type="IntAct" id="A1IGU5">
    <property type="interactions" value="3"/>
</dbReference>
<dbReference type="STRING" id="9606.ENSP00000328083"/>
<dbReference type="iPTMnet" id="A1IGU5"/>
<dbReference type="PhosphoSitePlus" id="A1IGU5"/>
<dbReference type="BioMuta" id="ARHGEF37"/>
<dbReference type="jPOST" id="A1IGU5"/>
<dbReference type="MassIVE" id="A1IGU5"/>
<dbReference type="PaxDb" id="9606-ENSP00000328083"/>
<dbReference type="PeptideAtlas" id="A1IGU5"/>
<dbReference type="ProteomicsDB" id="123"/>
<dbReference type="Antibodypedia" id="71502">
    <property type="antibodies" value="20 antibodies from 9 providers"/>
</dbReference>
<dbReference type="DNASU" id="389337"/>
<dbReference type="Ensembl" id="ENST00000333677.7">
    <property type="protein sequence ID" value="ENSP00000328083.6"/>
    <property type="gene ID" value="ENSG00000183111.12"/>
</dbReference>
<dbReference type="GeneID" id="389337"/>
<dbReference type="KEGG" id="hsa:389337"/>
<dbReference type="MANE-Select" id="ENST00000333677.7">
    <property type="protein sequence ID" value="ENSP00000328083.6"/>
    <property type="RefSeq nucleotide sequence ID" value="NM_001001669.3"/>
    <property type="RefSeq protein sequence ID" value="NP_001001669.2"/>
</dbReference>
<dbReference type="UCSC" id="uc003lra.2">
    <property type="organism name" value="human"/>
</dbReference>
<dbReference type="AGR" id="HGNC:34430"/>
<dbReference type="CTD" id="389337"/>
<dbReference type="DisGeNET" id="389337"/>
<dbReference type="GeneCards" id="ARHGEF37"/>
<dbReference type="HGNC" id="HGNC:34430">
    <property type="gene designation" value="ARHGEF37"/>
</dbReference>
<dbReference type="HPA" id="ENSG00000183111">
    <property type="expression patterns" value="Low tissue specificity"/>
</dbReference>
<dbReference type="MIM" id="620664">
    <property type="type" value="gene"/>
</dbReference>
<dbReference type="neXtProt" id="NX_A1IGU5"/>
<dbReference type="OpenTargets" id="ENSG00000183111"/>
<dbReference type="PharmGKB" id="PA165660135"/>
<dbReference type="VEuPathDB" id="HostDB:ENSG00000183111"/>
<dbReference type="eggNOG" id="KOG3519">
    <property type="taxonomic scope" value="Eukaryota"/>
</dbReference>
<dbReference type="GeneTree" id="ENSGT00950000183088"/>
<dbReference type="HOGENOM" id="CLU_005159_0_0_1"/>
<dbReference type="InParanoid" id="A1IGU5"/>
<dbReference type="OMA" id="FLCFRPH"/>
<dbReference type="OrthoDB" id="6244550at2759"/>
<dbReference type="PAN-GO" id="A1IGU5">
    <property type="GO annotations" value="0 GO annotations based on evolutionary models"/>
</dbReference>
<dbReference type="PhylomeDB" id="A1IGU5"/>
<dbReference type="TreeFam" id="TF330015"/>
<dbReference type="PathwayCommons" id="A1IGU5"/>
<dbReference type="Reactome" id="R-HSA-193648">
    <property type="pathway name" value="NRAGE signals death through JNK"/>
</dbReference>
<dbReference type="Reactome" id="R-HSA-416482">
    <property type="pathway name" value="G alpha (12/13) signalling events"/>
</dbReference>
<dbReference type="SignaLink" id="A1IGU5"/>
<dbReference type="BioGRID-ORCS" id="389337">
    <property type="hits" value="13 hits in 1148 CRISPR screens"/>
</dbReference>
<dbReference type="ChiTaRS" id="ARHGEF37">
    <property type="organism name" value="human"/>
</dbReference>
<dbReference type="GenomeRNAi" id="389337"/>
<dbReference type="Pharos" id="A1IGU5">
    <property type="development level" value="Tdark"/>
</dbReference>
<dbReference type="PRO" id="PR:A1IGU5"/>
<dbReference type="Proteomes" id="UP000005640">
    <property type="component" value="Chromosome 5"/>
</dbReference>
<dbReference type="RNAct" id="A1IGU5">
    <property type="molecule type" value="protein"/>
</dbReference>
<dbReference type="Bgee" id="ENSG00000183111">
    <property type="expression patterns" value="Expressed in parotid gland and 185 other cell types or tissues"/>
</dbReference>
<dbReference type="ExpressionAtlas" id="A1IGU5">
    <property type="expression patterns" value="baseline and differential"/>
</dbReference>
<dbReference type="GO" id="GO:0005737">
    <property type="term" value="C:cytoplasm"/>
    <property type="evidence" value="ECO:0000318"/>
    <property type="project" value="GO_Central"/>
</dbReference>
<dbReference type="GO" id="GO:0005085">
    <property type="term" value="F:guanyl-nucleotide exchange factor activity"/>
    <property type="evidence" value="ECO:0000318"/>
    <property type="project" value="GO_Central"/>
</dbReference>
<dbReference type="CDD" id="cd07589">
    <property type="entry name" value="BAR_DNMBP"/>
    <property type="match status" value="1"/>
</dbReference>
<dbReference type="CDD" id="cd00160">
    <property type="entry name" value="RhoGEF"/>
    <property type="match status" value="1"/>
</dbReference>
<dbReference type="CDD" id="cd11799">
    <property type="entry name" value="SH3_ARHGEF37_C1"/>
    <property type="match status" value="1"/>
</dbReference>
<dbReference type="CDD" id="cd11941">
    <property type="entry name" value="SH3_ARHGEF37_C2"/>
    <property type="match status" value="1"/>
</dbReference>
<dbReference type="FunFam" id="2.30.30.40:FF:000177">
    <property type="entry name" value="Rho guanine nucleotide exchange factor (GEF) 37"/>
    <property type="match status" value="1"/>
</dbReference>
<dbReference type="FunFam" id="1.20.1270.60:FF:000057">
    <property type="entry name" value="Rho guanine nucleotide exchange factor 37"/>
    <property type="match status" value="1"/>
</dbReference>
<dbReference type="FunFam" id="1.20.900.10:FF:000029">
    <property type="entry name" value="Rho guanine nucleotide exchange factor 37"/>
    <property type="match status" value="1"/>
</dbReference>
<dbReference type="FunFam" id="2.30.30.40:FF:000174">
    <property type="entry name" value="rho guanine nucleotide exchange factor 37"/>
    <property type="match status" value="1"/>
</dbReference>
<dbReference type="Gene3D" id="1.20.1270.60">
    <property type="entry name" value="Arfaptin homology (AH) domain/BAR domain"/>
    <property type="match status" value="1"/>
</dbReference>
<dbReference type="Gene3D" id="1.20.900.10">
    <property type="entry name" value="Dbl homology (DH) domain"/>
    <property type="match status" value="1"/>
</dbReference>
<dbReference type="Gene3D" id="2.30.30.40">
    <property type="entry name" value="SH3 Domains"/>
    <property type="match status" value="2"/>
</dbReference>
<dbReference type="InterPro" id="IPR027267">
    <property type="entry name" value="AH/BAR_dom_sf"/>
</dbReference>
<dbReference type="InterPro" id="IPR035636">
    <property type="entry name" value="ARHGEF37_SH3_2"/>
</dbReference>
<dbReference type="InterPro" id="IPR035823">
    <property type="entry name" value="ARHGEF37_SH3_C1"/>
</dbReference>
<dbReference type="InterPro" id="IPR004148">
    <property type="entry name" value="BAR_dom"/>
</dbReference>
<dbReference type="InterPro" id="IPR035899">
    <property type="entry name" value="DBL_dom_sf"/>
</dbReference>
<dbReference type="InterPro" id="IPR000219">
    <property type="entry name" value="DH_dom"/>
</dbReference>
<dbReference type="InterPro" id="IPR051492">
    <property type="entry name" value="Dynamin-Rho_GEF"/>
</dbReference>
<dbReference type="InterPro" id="IPR036028">
    <property type="entry name" value="SH3-like_dom_sf"/>
</dbReference>
<dbReference type="InterPro" id="IPR001452">
    <property type="entry name" value="SH3_domain"/>
</dbReference>
<dbReference type="PANTHER" id="PTHR22834">
    <property type="entry name" value="NUCLEAR FUSION PROTEIN FUS2"/>
    <property type="match status" value="1"/>
</dbReference>
<dbReference type="PANTHER" id="PTHR22834:SF9">
    <property type="entry name" value="RHO GUANINE NUCLEOTIDE EXCHANGE FACTOR 37"/>
    <property type="match status" value="1"/>
</dbReference>
<dbReference type="Pfam" id="PF00621">
    <property type="entry name" value="RhoGEF"/>
    <property type="match status" value="1"/>
</dbReference>
<dbReference type="Pfam" id="PF00018">
    <property type="entry name" value="SH3_1"/>
    <property type="match status" value="1"/>
</dbReference>
<dbReference type="Pfam" id="PF07653">
    <property type="entry name" value="SH3_2"/>
    <property type="match status" value="1"/>
</dbReference>
<dbReference type="SMART" id="SM00721">
    <property type="entry name" value="BAR"/>
    <property type="match status" value="1"/>
</dbReference>
<dbReference type="SMART" id="SM00325">
    <property type="entry name" value="RhoGEF"/>
    <property type="match status" value="1"/>
</dbReference>
<dbReference type="SMART" id="SM00326">
    <property type="entry name" value="SH3"/>
    <property type="match status" value="2"/>
</dbReference>
<dbReference type="SUPFAM" id="SSF103657">
    <property type="entry name" value="BAR/IMD domain-like"/>
    <property type="match status" value="1"/>
</dbReference>
<dbReference type="SUPFAM" id="SSF48065">
    <property type="entry name" value="DBL homology domain (DH-domain)"/>
    <property type="match status" value="1"/>
</dbReference>
<dbReference type="SUPFAM" id="SSF50044">
    <property type="entry name" value="SH3-domain"/>
    <property type="match status" value="2"/>
</dbReference>
<dbReference type="PROSITE" id="PS51021">
    <property type="entry name" value="BAR"/>
    <property type="match status" value="1"/>
</dbReference>
<dbReference type="PROSITE" id="PS50010">
    <property type="entry name" value="DH_2"/>
    <property type="match status" value="1"/>
</dbReference>
<dbReference type="PROSITE" id="PS50002">
    <property type="entry name" value="SH3"/>
    <property type="match status" value="2"/>
</dbReference>
<name>ARH37_HUMAN</name>
<comment type="function">
    <text evidence="1">May act as a guanine nucleotide exchange factor (GEF).</text>
</comment>
<comment type="sequence caution" evidence="7">
    <conflict type="erroneous initiation">
        <sequence resource="EMBL-CDS" id="BAC85655"/>
    </conflict>
    <text>Truncated N-terminus.</text>
</comment>
<sequence length="675" mass="76278">MAKHGADEPSSRSGSPDREGRASEDRSLLHQRLAVRELIDTEVSYLHMLQLCASDIRSRLQQLPQGDLDVLFSNIDDIIKVNSRFLHDLQETASKEEEQVQLVGNIFLEFQEELEQVYKVYCASYDQALLLVDTYRKEPELQRHIQGIVEAVVPQAGSSGLSFLLVIPLQRITRYPLLLQKILENTVPDASAYPVLQRAVSALQDVNTNINEYKMRKEVASKYTKVEQLTLRERLARINTHTLSKKTTRLSQLLKQEAGLIPRTEDKEFDDLEERFQWVSLCVTELKNNVAAYLDNLQAFLYFRPHEYNLDIPEGPAVQYCNLARDLHLEAFLKFKQRLEGLVWQPLCSLAKALLGPQNLIKKRLDKLLDFERVEEKLLEVGSVTYQEEAARHTYQALNSLLVAELPQFNQLVMQWLGQIMCTFVTLQRDLAKQVLQRAEGSMAQLPHHHVPEPAFRKLVEDALGRTSNQLRSFQETFEKVQPPPTTQPLLPGSERQVQALLSRYGPGKLYQVTSNISGTGTLDLTLPRGQIVAILQNKDTKGNSGRWLVDTGGHRGYVPAGKLQLYHVVPSAEELRRQAGLNKDPRCLTPEPSPALVPSIPTMNQVIAAYPFVARSSHEVSLQAGQPVTILEAQDKKGNPEWSLVEVNGQRGYVPSGFLARARSPVLWGWSLPS</sequence>
<proteinExistence type="evidence at protein level"/>
<reference key="1">
    <citation type="submission" date="2005-01" db="EMBL/GenBank/DDBJ databases">
        <title>Hypothetical proteins, rat 2-88 (Tuba 3) and its homologs of mouse and human.</title>
        <authorList>
            <person name="Yamazaki N."/>
        </authorList>
    </citation>
    <scope>NUCLEOTIDE SEQUENCE [MRNA]</scope>
</reference>
<reference key="2">
    <citation type="journal article" date="2004" name="Nat. Genet.">
        <title>Complete sequencing and characterization of 21,243 full-length human cDNAs.</title>
        <authorList>
            <person name="Ota T."/>
            <person name="Suzuki Y."/>
            <person name="Nishikawa T."/>
            <person name="Otsuki T."/>
            <person name="Sugiyama T."/>
            <person name="Irie R."/>
            <person name="Wakamatsu A."/>
            <person name="Hayashi K."/>
            <person name="Sato H."/>
            <person name="Nagai K."/>
            <person name="Kimura K."/>
            <person name="Makita H."/>
            <person name="Sekine M."/>
            <person name="Obayashi M."/>
            <person name="Nishi T."/>
            <person name="Shibahara T."/>
            <person name="Tanaka T."/>
            <person name="Ishii S."/>
            <person name="Yamamoto J."/>
            <person name="Saito K."/>
            <person name="Kawai Y."/>
            <person name="Isono Y."/>
            <person name="Nakamura Y."/>
            <person name="Nagahari K."/>
            <person name="Murakami K."/>
            <person name="Yasuda T."/>
            <person name="Iwayanagi T."/>
            <person name="Wagatsuma M."/>
            <person name="Shiratori A."/>
            <person name="Sudo H."/>
            <person name="Hosoiri T."/>
            <person name="Kaku Y."/>
            <person name="Kodaira H."/>
            <person name="Kondo H."/>
            <person name="Sugawara M."/>
            <person name="Takahashi M."/>
            <person name="Kanda K."/>
            <person name="Yokoi T."/>
            <person name="Furuya T."/>
            <person name="Kikkawa E."/>
            <person name="Omura Y."/>
            <person name="Abe K."/>
            <person name="Kamihara K."/>
            <person name="Katsuta N."/>
            <person name="Sato K."/>
            <person name="Tanikawa M."/>
            <person name="Yamazaki M."/>
            <person name="Ninomiya K."/>
            <person name="Ishibashi T."/>
            <person name="Yamashita H."/>
            <person name="Murakawa K."/>
            <person name="Fujimori K."/>
            <person name="Tanai H."/>
            <person name="Kimata M."/>
            <person name="Watanabe M."/>
            <person name="Hiraoka S."/>
            <person name="Chiba Y."/>
            <person name="Ishida S."/>
            <person name="Ono Y."/>
            <person name="Takiguchi S."/>
            <person name="Watanabe S."/>
            <person name="Yosida M."/>
            <person name="Hotuta T."/>
            <person name="Kusano J."/>
            <person name="Kanehori K."/>
            <person name="Takahashi-Fujii A."/>
            <person name="Hara H."/>
            <person name="Tanase T.-O."/>
            <person name="Nomura Y."/>
            <person name="Togiya S."/>
            <person name="Komai F."/>
            <person name="Hara R."/>
            <person name="Takeuchi K."/>
            <person name="Arita M."/>
            <person name="Imose N."/>
            <person name="Musashino K."/>
            <person name="Yuuki H."/>
            <person name="Oshima A."/>
            <person name="Sasaki N."/>
            <person name="Aotsuka S."/>
            <person name="Yoshikawa Y."/>
            <person name="Matsunawa H."/>
            <person name="Ichihara T."/>
            <person name="Shiohata N."/>
            <person name="Sano S."/>
            <person name="Moriya S."/>
            <person name="Momiyama H."/>
            <person name="Satoh N."/>
            <person name="Takami S."/>
            <person name="Terashima Y."/>
            <person name="Suzuki O."/>
            <person name="Nakagawa S."/>
            <person name="Senoh A."/>
            <person name="Mizoguchi H."/>
            <person name="Goto Y."/>
            <person name="Shimizu F."/>
            <person name="Wakebe H."/>
            <person name="Hishigaki H."/>
            <person name="Watanabe T."/>
            <person name="Sugiyama A."/>
            <person name="Takemoto M."/>
            <person name="Kawakami B."/>
            <person name="Yamazaki M."/>
            <person name="Watanabe K."/>
            <person name="Kumagai A."/>
            <person name="Itakura S."/>
            <person name="Fukuzumi Y."/>
            <person name="Fujimori Y."/>
            <person name="Komiyama M."/>
            <person name="Tashiro H."/>
            <person name="Tanigami A."/>
            <person name="Fujiwara T."/>
            <person name="Ono T."/>
            <person name="Yamada K."/>
            <person name="Fujii Y."/>
            <person name="Ozaki K."/>
            <person name="Hirao M."/>
            <person name="Ohmori Y."/>
            <person name="Kawabata A."/>
            <person name="Hikiji T."/>
            <person name="Kobatake N."/>
            <person name="Inagaki H."/>
            <person name="Ikema Y."/>
            <person name="Okamoto S."/>
            <person name="Okitani R."/>
            <person name="Kawakami T."/>
            <person name="Noguchi S."/>
            <person name="Itoh T."/>
            <person name="Shigeta K."/>
            <person name="Senba T."/>
            <person name="Matsumura K."/>
            <person name="Nakajima Y."/>
            <person name="Mizuno T."/>
            <person name="Morinaga M."/>
            <person name="Sasaki M."/>
            <person name="Togashi T."/>
            <person name="Oyama M."/>
            <person name="Hata H."/>
            <person name="Watanabe M."/>
            <person name="Komatsu T."/>
            <person name="Mizushima-Sugano J."/>
            <person name="Satoh T."/>
            <person name="Shirai Y."/>
            <person name="Takahashi Y."/>
            <person name="Nakagawa K."/>
            <person name="Okumura K."/>
            <person name="Nagase T."/>
            <person name="Nomura N."/>
            <person name="Kikuchi H."/>
            <person name="Masuho Y."/>
            <person name="Yamashita R."/>
            <person name="Nakai K."/>
            <person name="Yada T."/>
            <person name="Nakamura Y."/>
            <person name="Ohara O."/>
            <person name="Isogai T."/>
            <person name="Sugano S."/>
        </authorList>
    </citation>
    <scope>NUCLEOTIDE SEQUENCE [LARGE SCALE MRNA] OF 433-675</scope>
    <scope>VARIANTS LEU-489 AND VAL-604</scope>
    <source>
        <tissue>Tongue</tissue>
    </source>
</reference>